<accession>Q605I7</accession>
<organism>
    <name type="scientific">Methylococcus capsulatus (strain ATCC 33009 / NCIMB 11132 / Bath)</name>
    <dbReference type="NCBI Taxonomy" id="243233"/>
    <lineage>
        <taxon>Bacteria</taxon>
        <taxon>Pseudomonadati</taxon>
        <taxon>Pseudomonadota</taxon>
        <taxon>Gammaproteobacteria</taxon>
        <taxon>Methylococcales</taxon>
        <taxon>Methylococcaceae</taxon>
        <taxon>Methylococcus</taxon>
    </lineage>
</organism>
<protein>
    <recommendedName>
        <fullName evidence="1">Cobalt-precorrin-5B C(1)-methyltransferase</fullName>
        <ecNumber evidence="1">2.1.1.195</ecNumber>
    </recommendedName>
    <alternativeName>
        <fullName evidence="1">Cobalt-precorrin-6A synthase</fullName>
    </alternativeName>
</protein>
<keyword id="KW-0169">Cobalamin biosynthesis</keyword>
<keyword id="KW-0489">Methyltransferase</keyword>
<keyword id="KW-1185">Reference proteome</keyword>
<keyword id="KW-0949">S-adenosyl-L-methionine</keyword>
<keyword id="KW-0808">Transferase</keyword>
<comment type="function">
    <text evidence="1">Catalyzes the methylation of C-1 in cobalt-precorrin-5B to form cobalt-precorrin-6A.</text>
</comment>
<comment type="catalytic activity">
    <reaction evidence="1">
        <text>Co-precorrin-5B + S-adenosyl-L-methionine = Co-precorrin-6A + S-adenosyl-L-homocysteine</text>
        <dbReference type="Rhea" id="RHEA:26285"/>
        <dbReference type="ChEBI" id="CHEBI:57856"/>
        <dbReference type="ChEBI" id="CHEBI:59789"/>
        <dbReference type="ChEBI" id="CHEBI:60063"/>
        <dbReference type="ChEBI" id="CHEBI:60064"/>
        <dbReference type="EC" id="2.1.1.195"/>
    </reaction>
</comment>
<comment type="pathway">
    <text evidence="1">Cofactor biosynthesis; adenosylcobalamin biosynthesis; cob(II)yrinate a,c-diamide from sirohydrochlorin (anaerobic route): step 6/10.</text>
</comment>
<comment type="similarity">
    <text evidence="1">Belongs to the CbiD family.</text>
</comment>
<sequence length="381" mass="40378">MEKKPKGTRTGYTTGACSAAAARAATLGLVRGRVPDQVECELPNGQRVVFAVTDGRCEGATAHAVVIKDAGDDPDVTDKARLTADVALLPEAVGAVVLKGGEGVGTITRQGLGLEVGGPAINPVPRRNIEANVREAAGDLLERAGLEVVISVPGGEEIAKRTLNYRLGIVGGISILGTTGIVHPYSTAAFRASVIQAIEVAANQGQDVVVLTTGGRTERFVMNELPQLPPVCFVQMGDFLKYALDTVVRCGLRHVVIGGMVGKLTKIAQGETITHANRNAVDTDLLADIAAEVGAPAEVCADIRNSAMARYASERMEDLGLITAFYEALGRRVIRTLRERYPDRFTLRILMCDFEANKLAEVAEEDSPGLRLSSPLPRGED</sequence>
<feature type="chain" id="PRO_0000257766" description="Cobalt-precorrin-5B C(1)-methyltransferase">
    <location>
        <begin position="1"/>
        <end position="381"/>
    </location>
</feature>
<name>CBID_METCA</name>
<evidence type="ECO:0000255" key="1">
    <source>
        <dbReference type="HAMAP-Rule" id="MF_00787"/>
    </source>
</evidence>
<gene>
    <name evidence="1" type="primary">cbiD</name>
    <name type="ordered locus">MCA2297</name>
</gene>
<reference key="1">
    <citation type="journal article" date="2004" name="PLoS Biol.">
        <title>Genomic insights into methanotrophy: the complete genome sequence of Methylococcus capsulatus (Bath).</title>
        <authorList>
            <person name="Ward N.L."/>
            <person name="Larsen O."/>
            <person name="Sakwa J."/>
            <person name="Bruseth L."/>
            <person name="Khouri H.M."/>
            <person name="Durkin A.S."/>
            <person name="Dimitrov G."/>
            <person name="Jiang L."/>
            <person name="Scanlan D."/>
            <person name="Kang K.H."/>
            <person name="Lewis M.R."/>
            <person name="Nelson K.E."/>
            <person name="Methe B.A."/>
            <person name="Wu M."/>
            <person name="Heidelberg J.F."/>
            <person name="Paulsen I.T."/>
            <person name="Fouts D.E."/>
            <person name="Ravel J."/>
            <person name="Tettelin H."/>
            <person name="Ren Q."/>
            <person name="Read T.D."/>
            <person name="DeBoy R.T."/>
            <person name="Seshadri R."/>
            <person name="Salzberg S.L."/>
            <person name="Jensen H.B."/>
            <person name="Birkeland N.K."/>
            <person name="Nelson W.C."/>
            <person name="Dodson R.J."/>
            <person name="Grindhaug S.H."/>
            <person name="Holt I.E."/>
            <person name="Eidhammer I."/>
            <person name="Jonasen I."/>
            <person name="Vanaken S."/>
            <person name="Utterback T.R."/>
            <person name="Feldblyum T.V."/>
            <person name="Fraser C.M."/>
            <person name="Lillehaug J.R."/>
            <person name="Eisen J.A."/>
        </authorList>
    </citation>
    <scope>NUCLEOTIDE SEQUENCE [LARGE SCALE GENOMIC DNA]</scope>
    <source>
        <strain>ATCC 33009 / NCIMB 11132 / Bath</strain>
    </source>
</reference>
<dbReference type="EC" id="2.1.1.195" evidence="1"/>
<dbReference type="EMBL" id="AE017282">
    <property type="protein sequence ID" value="AAU91665.1"/>
    <property type="molecule type" value="Genomic_DNA"/>
</dbReference>
<dbReference type="RefSeq" id="WP_010961525.1">
    <property type="nucleotide sequence ID" value="NC_002977.6"/>
</dbReference>
<dbReference type="SMR" id="Q605I7"/>
<dbReference type="STRING" id="243233.MCA2297"/>
<dbReference type="GeneID" id="88224503"/>
<dbReference type="KEGG" id="mca:MCA2297"/>
<dbReference type="eggNOG" id="COG1903">
    <property type="taxonomic scope" value="Bacteria"/>
</dbReference>
<dbReference type="HOGENOM" id="CLU_041273_0_0_6"/>
<dbReference type="UniPathway" id="UPA00148">
    <property type="reaction ID" value="UER00227"/>
</dbReference>
<dbReference type="Proteomes" id="UP000006821">
    <property type="component" value="Chromosome"/>
</dbReference>
<dbReference type="GO" id="GO:0043780">
    <property type="term" value="F:cobalt-precorrin-5B C1-methyltransferase activity"/>
    <property type="evidence" value="ECO:0007669"/>
    <property type="project" value="RHEA"/>
</dbReference>
<dbReference type="GO" id="GO:0019251">
    <property type="term" value="P:anaerobic cobalamin biosynthetic process"/>
    <property type="evidence" value="ECO:0007669"/>
    <property type="project" value="UniProtKB-UniRule"/>
</dbReference>
<dbReference type="GO" id="GO:0032259">
    <property type="term" value="P:methylation"/>
    <property type="evidence" value="ECO:0007669"/>
    <property type="project" value="UniProtKB-KW"/>
</dbReference>
<dbReference type="Gene3D" id="3.30.2110.10">
    <property type="entry name" value="CbiD-like"/>
    <property type="match status" value="1"/>
</dbReference>
<dbReference type="HAMAP" id="MF_00787">
    <property type="entry name" value="CbiD"/>
    <property type="match status" value="1"/>
</dbReference>
<dbReference type="InterPro" id="IPR002748">
    <property type="entry name" value="CbiD"/>
</dbReference>
<dbReference type="InterPro" id="IPR036074">
    <property type="entry name" value="CbiD_sf"/>
</dbReference>
<dbReference type="NCBIfam" id="TIGR00312">
    <property type="entry name" value="cbiD"/>
    <property type="match status" value="1"/>
</dbReference>
<dbReference type="NCBIfam" id="NF000849">
    <property type="entry name" value="PRK00075.1-1"/>
    <property type="match status" value="1"/>
</dbReference>
<dbReference type="PANTHER" id="PTHR35863">
    <property type="entry name" value="COBALT-PRECORRIN-5B C(1)-METHYLTRANSFERASE"/>
    <property type="match status" value="1"/>
</dbReference>
<dbReference type="PANTHER" id="PTHR35863:SF1">
    <property type="entry name" value="COBALT-PRECORRIN-5B C(1)-METHYLTRANSFERASE"/>
    <property type="match status" value="1"/>
</dbReference>
<dbReference type="Pfam" id="PF01888">
    <property type="entry name" value="CbiD"/>
    <property type="match status" value="1"/>
</dbReference>
<dbReference type="PIRSF" id="PIRSF026782">
    <property type="entry name" value="CbiD"/>
    <property type="match status" value="1"/>
</dbReference>
<dbReference type="SUPFAM" id="SSF111342">
    <property type="entry name" value="CbiD-like"/>
    <property type="match status" value="1"/>
</dbReference>
<proteinExistence type="inferred from homology"/>